<sequence>MTQVTFKHNPVTLVGTERKVGDKAPNFTVVNRDLEEVTLHDYDGKVRLISVVPSIDTSVCSTQTRKFNEEASNLDNTVVLTISVDLPFAQKKWCAAEGLPNAITLSDHRDLSFGEAYGVIMKELRLLARSVFVVNAVGEIVYTEVVPEGSDHPNYEAAIEAAKKA</sequence>
<gene>
    <name evidence="1" type="primary">tpx</name>
    <name type="ordered locus">lmo1583</name>
</gene>
<feature type="chain" id="PRO_0000187887" description="Thiol peroxidase">
    <location>
        <begin position="1"/>
        <end position="165"/>
    </location>
</feature>
<feature type="domain" description="Thioredoxin" evidence="1">
    <location>
        <begin position="18"/>
        <end position="164"/>
    </location>
</feature>
<feature type="active site" description="Cysteine sulfenic acid (-SOH) intermediate" evidence="1">
    <location>
        <position position="60"/>
    </location>
</feature>
<feature type="disulfide bond" description="Redox-active" evidence="1">
    <location>
        <begin position="60"/>
        <end position="94"/>
    </location>
</feature>
<name>TPX_LISMO</name>
<proteinExistence type="inferred from homology"/>
<organism>
    <name type="scientific">Listeria monocytogenes serovar 1/2a (strain ATCC BAA-679 / EGD-e)</name>
    <dbReference type="NCBI Taxonomy" id="169963"/>
    <lineage>
        <taxon>Bacteria</taxon>
        <taxon>Bacillati</taxon>
        <taxon>Bacillota</taxon>
        <taxon>Bacilli</taxon>
        <taxon>Bacillales</taxon>
        <taxon>Listeriaceae</taxon>
        <taxon>Listeria</taxon>
    </lineage>
</organism>
<dbReference type="EC" id="1.11.1.24" evidence="1"/>
<dbReference type="EMBL" id="AL591979">
    <property type="protein sequence ID" value="CAC99661.1"/>
    <property type="molecule type" value="Genomic_DNA"/>
</dbReference>
<dbReference type="PIR" id="AG1272">
    <property type="entry name" value="AG1272"/>
</dbReference>
<dbReference type="RefSeq" id="NP_465108.1">
    <property type="nucleotide sequence ID" value="NC_003210.1"/>
</dbReference>
<dbReference type="RefSeq" id="WP_009931845.1">
    <property type="nucleotide sequence ID" value="NZ_CP149495.1"/>
</dbReference>
<dbReference type="SMR" id="Q8Y6U8"/>
<dbReference type="STRING" id="169963.gene:17594240"/>
<dbReference type="PaxDb" id="169963-lmo1583"/>
<dbReference type="EnsemblBacteria" id="CAC99661">
    <property type="protein sequence ID" value="CAC99661"/>
    <property type="gene ID" value="CAC99661"/>
</dbReference>
<dbReference type="GeneID" id="987763"/>
<dbReference type="KEGG" id="lmo:lmo1583"/>
<dbReference type="PATRIC" id="fig|169963.11.peg.1625"/>
<dbReference type="eggNOG" id="COG2077">
    <property type="taxonomic scope" value="Bacteria"/>
</dbReference>
<dbReference type="HOGENOM" id="CLU_042529_12_0_9"/>
<dbReference type="OrthoDB" id="9781543at2"/>
<dbReference type="PhylomeDB" id="Q8Y6U8"/>
<dbReference type="BioCyc" id="LMON169963:LMO1583-MONOMER"/>
<dbReference type="Proteomes" id="UP000000817">
    <property type="component" value="Chromosome"/>
</dbReference>
<dbReference type="GO" id="GO:0008379">
    <property type="term" value="F:thioredoxin peroxidase activity"/>
    <property type="evidence" value="ECO:0007669"/>
    <property type="project" value="UniProtKB-UniRule"/>
</dbReference>
<dbReference type="CDD" id="cd03014">
    <property type="entry name" value="PRX_Atyp2cys"/>
    <property type="match status" value="1"/>
</dbReference>
<dbReference type="Gene3D" id="3.40.30.10">
    <property type="entry name" value="Glutaredoxin"/>
    <property type="match status" value="1"/>
</dbReference>
<dbReference type="HAMAP" id="MF_00269">
    <property type="entry name" value="Tpx"/>
    <property type="match status" value="1"/>
</dbReference>
<dbReference type="InterPro" id="IPR013740">
    <property type="entry name" value="Redoxin"/>
</dbReference>
<dbReference type="InterPro" id="IPR036249">
    <property type="entry name" value="Thioredoxin-like_sf"/>
</dbReference>
<dbReference type="InterPro" id="IPR013766">
    <property type="entry name" value="Thioredoxin_domain"/>
</dbReference>
<dbReference type="InterPro" id="IPR002065">
    <property type="entry name" value="TPX"/>
</dbReference>
<dbReference type="InterPro" id="IPR018219">
    <property type="entry name" value="Tpx_CS"/>
</dbReference>
<dbReference type="InterPro" id="IPR050455">
    <property type="entry name" value="Tpx_Peroxidase_subfamily"/>
</dbReference>
<dbReference type="NCBIfam" id="NF001808">
    <property type="entry name" value="PRK00522.1"/>
    <property type="match status" value="1"/>
</dbReference>
<dbReference type="PANTHER" id="PTHR43110">
    <property type="entry name" value="THIOL PEROXIDASE"/>
    <property type="match status" value="1"/>
</dbReference>
<dbReference type="PANTHER" id="PTHR43110:SF1">
    <property type="entry name" value="THIOL PEROXIDASE"/>
    <property type="match status" value="1"/>
</dbReference>
<dbReference type="Pfam" id="PF08534">
    <property type="entry name" value="Redoxin"/>
    <property type="match status" value="1"/>
</dbReference>
<dbReference type="SUPFAM" id="SSF52833">
    <property type="entry name" value="Thioredoxin-like"/>
    <property type="match status" value="1"/>
</dbReference>
<dbReference type="PROSITE" id="PS51352">
    <property type="entry name" value="THIOREDOXIN_2"/>
    <property type="match status" value="1"/>
</dbReference>
<dbReference type="PROSITE" id="PS01265">
    <property type="entry name" value="TPX"/>
    <property type="match status" value="1"/>
</dbReference>
<accession>Q8Y6U8</accession>
<comment type="function">
    <text evidence="1">Thiol-specific peroxidase that catalyzes the reduction of hydrogen peroxide and organic hydroperoxides to water and alcohols, respectively. Plays a role in cell protection against oxidative stress by detoxifying peroxides.</text>
</comment>
<comment type="catalytic activity">
    <reaction evidence="1">
        <text>a hydroperoxide + [thioredoxin]-dithiol = an alcohol + [thioredoxin]-disulfide + H2O</text>
        <dbReference type="Rhea" id="RHEA:62620"/>
        <dbReference type="Rhea" id="RHEA-COMP:10698"/>
        <dbReference type="Rhea" id="RHEA-COMP:10700"/>
        <dbReference type="ChEBI" id="CHEBI:15377"/>
        <dbReference type="ChEBI" id="CHEBI:29950"/>
        <dbReference type="ChEBI" id="CHEBI:30879"/>
        <dbReference type="ChEBI" id="CHEBI:35924"/>
        <dbReference type="ChEBI" id="CHEBI:50058"/>
        <dbReference type="EC" id="1.11.1.24"/>
    </reaction>
</comment>
<comment type="subunit">
    <text evidence="1">Homodimer.</text>
</comment>
<comment type="miscellaneous">
    <text evidence="1">The active site is a conserved redox-active cysteine residue, the peroxidatic cysteine (C(P)), which makes the nucleophilic attack on the peroxide substrate. The peroxide oxidizes the C(P)-SH to cysteine sulfenic acid (C(P)-SOH), which then reacts with another cysteine residue, the resolving cysteine (C(R)), to form a disulfide bridge. The disulfide is subsequently reduced by an appropriate electron donor to complete the catalytic cycle. In this atypical 2-Cys peroxiredoxin, C(R) is present in the same subunit to form an intramolecular disulfide. The disulfide is subsequently reduced by thioredoxin.</text>
</comment>
<comment type="similarity">
    <text evidence="1">Belongs to the peroxiredoxin family. Tpx subfamily.</text>
</comment>
<keyword id="KW-0049">Antioxidant</keyword>
<keyword id="KW-1015">Disulfide bond</keyword>
<keyword id="KW-0560">Oxidoreductase</keyword>
<keyword id="KW-0575">Peroxidase</keyword>
<keyword id="KW-0676">Redox-active center</keyword>
<keyword id="KW-1185">Reference proteome</keyword>
<protein>
    <recommendedName>
        <fullName evidence="1">Thiol peroxidase</fullName>
        <shortName evidence="1">Tpx</shortName>
        <ecNumber evidence="1">1.11.1.24</ecNumber>
    </recommendedName>
    <alternativeName>
        <fullName evidence="1">Peroxiredoxin tpx</fullName>
        <shortName evidence="1">Prx</shortName>
    </alternativeName>
    <alternativeName>
        <fullName evidence="1">Thioredoxin peroxidase</fullName>
    </alternativeName>
    <alternativeName>
        <fullName evidence="1">Thioredoxin-dependent peroxiredoxin</fullName>
    </alternativeName>
</protein>
<reference key="1">
    <citation type="journal article" date="2001" name="Science">
        <title>Comparative genomics of Listeria species.</title>
        <authorList>
            <person name="Glaser P."/>
            <person name="Frangeul L."/>
            <person name="Buchrieser C."/>
            <person name="Rusniok C."/>
            <person name="Amend A."/>
            <person name="Baquero F."/>
            <person name="Berche P."/>
            <person name="Bloecker H."/>
            <person name="Brandt P."/>
            <person name="Chakraborty T."/>
            <person name="Charbit A."/>
            <person name="Chetouani F."/>
            <person name="Couve E."/>
            <person name="de Daruvar A."/>
            <person name="Dehoux P."/>
            <person name="Domann E."/>
            <person name="Dominguez-Bernal G."/>
            <person name="Duchaud E."/>
            <person name="Durant L."/>
            <person name="Dussurget O."/>
            <person name="Entian K.-D."/>
            <person name="Fsihi H."/>
            <person name="Garcia-del Portillo F."/>
            <person name="Garrido P."/>
            <person name="Gautier L."/>
            <person name="Goebel W."/>
            <person name="Gomez-Lopez N."/>
            <person name="Hain T."/>
            <person name="Hauf J."/>
            <person name="Jackson D."/>
            <person name="Jones L.-M."/>
            <person name="Kaerst U."/>
            <person name="Kreft J."/>
            <person name="Kuhn M."/>
            <person name="Kunst F."/>
            <person name="Kurapkat G."/>
            <person name="Madueno E."/>
            <person name="Maitournam A."/>
            <person name="Mata Vicente J."/>
            <person name="Ng E."/>
            <person name="Nedjari H."/>
            <person name="Nordsiek G."/>
            <person name="Novella S."/>
            <person name="de Pablos B."/>
            <person name="Perez-Diaz J.-C."/>
            <person name="Purcell R."/>
            <person name="Remmel B."/>
            <person name="Rose M."/>
            <person name="Schlueter T."/>
            <person name="Simoes N."/>
            <person name="Tierrez A."/>
            <person name="Vazquez-Boland J.-A."/>
            <person name="Voss H."/>
            <person name="Wehland J."/>
            <person name="Cossart P."/>
        </authorList>
    </citation>
    <scope>NUCLEOTIDE SEQUENCE [LARGE SCALE GENOMIC DNA]</scope>
    <source>
        <strain>ATCC BAA-679 / EGD-e</strain>
    </source>
</reference>
<evidence type="ECO:0000255" key="1">
    <source>
        <dbReference type="HAMAP-Rule" id="MF_00269"/>
    </source>
</evidence>